<reference key="1">
    <citation type="journal article" date="2000" name="Nature">
        <title>Sequence and analysis of chromosome 3 of the plant Arabidopsis thaliana.</title>
        <authorList>
            <person name="Salanoubat M."/>
            <person name="Lemcke K."/>
            <person name="Rieger M."/>
            <person name="Ansorge W."/>
            <person name="Unseld M."/>
            <person name="Fartmann B."/>
            <person name="Valle G."/>
            <person name="Bloecker H."/>
            <person name="Perez-Alonso M."/>
            <person name="Obermaier B."/>
            <person name="Delseny M."/>
            <person name="Boutry M."/>
            <person name="Grivell L.A."/>
            <person name="Mache R."/>
            <person name="Puigdomenech P."/>
            <person name="De Simone V."/>
            <person name="Choisne N."/>
            <person name="Artiguenave F."/>
            <person name="Robert C."/>
            <person name="Brottier P."/>
            <person name="Wincker P."/>
            <person name="Cattolico L."/>
            <person name="Weissenbach J."/>
            <person name="Saurin W."/>
            <person name="Quetier F."/>
            <person name="Schaefer M."/>
            <person name="Mueller-Auer S."/>
            <person name="Gabel C."/>
            <person name="Fuchs M."/>
            <person name="Benes V."/>
            <person name="Wurmbach E."/>
            <person name="Drzonek H."/>
            <person name="Erfle H."/>
            <person name="Jordan N."/>
            <person name="Bangert S."/>
            <person name="Wiedelmann R."/>
            <person name="Kranz H."/>
            <person name="Voss H."/>
            <person name="Holland R."/>
            <person name="Brandt P."/>
            <person name="Nyakatura G."/>
            <person name="Vezzi A."/>
            <person name="D'Angelo M."/>
            <person name="Pallavicini A."/>
            <person name="Toppo S."/>
            <person name="Simionati B."/>
            <person name="Conrad A."/>
            <person name="Hornischer K."/>
            <person name="Kauer G."/>
            <person name="Loehnert T.-H."/>
            <person name="Nordsiek G."/>
            <person name="Reichelt J."/>
            <person name="Scharfe M."/>
            <person name="Schoen O."/>
            <person name="Bargues M."/>
            <person name="Terol J."/>
            <person name="Climent J."/>
            <person name="Navarro P."/>
            <person name="Collado C."/>
            <person name="Perez-Perez A."/>
            <person name="Ottenwaelder B."/>
            <person name="Duchemin D."/>
            <person name="Cooke R."/>
            <person name="Laudie M."/>
            <person name="Berger-Llauro C."/>
            <person name="Purnelle B."/>
            <person name="Masuy D."/>
            <person name="de Haan M."/>
            <person name="Maarse A.C."/>
            <person name="Alcaraz J.-P."/>
            <person name="Cottet A."/>
            <person name="Casacuberta E."/>
            <person name="Monfort A."/>
            <person name="Argiriou A."/>
            <person name="Flores M."/>
            <person name="Liguori R."/>
            <person name="Vitale D."/>
            <person name="Mannhaupt G."/>
            <person name="Haase D."/>
            <person name="Schoof H."/>
            <person name="Rudd S."/>
            <person name="Zaccaria P."/>
            <person name="Mewes H.-W."/>
            <person name="Mayer K.F.X."/>
            <person name="Kaul S."/>
            <person name="Town C.D."/>
            <person name="Koo H.L."/>
            <person name="Tallon L.J."/>
            <person name="Jenkins J."/>
            <person name="Rooney T."/>
            <person name="Rizzo M."/>
            <person name="Walts A."/>
            <person name="Utterback T."/>
            <person name="Fujii C.Y."/>
            <person name="Shea T.P."/>
            <person name="Creasy T.H."/>
            <person name="Haas B."/>
            <person name="Maiti R."/>
            <person name="Wu D."/>
            <person name="Peterson J."/>
            <person name="Van Aken S."/>
            <person name="Pai G."/>
            <person name="Militscher J."/>
            <person name="Sellers P."/>
            <person name="Gill J.E."/>
            <person name="Feldblyum T.V."/>
            <person name="Preuss D."/>
            <person name="Lin X."/>
            <person name="Nierman W.C."/>
            <person name="Salzberg S.L."/>
            <person name="White O."/>
            <person name="Venter J.C."/>
            <person name="Fraser C.M."/>
            <person name="Kaneko T."/>
            <person name="Nakamura Y."/>
            <person name="Sato S."/>
            <person name="Kato T."/>
            <person name="Asamizu E."/>
            <person name="Sasamoto S."/>
            <person name="Kimura T."/>
            <person name="Idesawa K."/>
            <person name="Kawashima K."/>
            <person name="Kishida Y."/>
            <person name="Kiyokawa C."/>
            <person name="Kohara M."/>
            <person name="Matsumoto M."/>
            <person name="Matsuno A."/>
            <person name="Muraki A."/>
            <person name="Nakayama S."/>
            <person name="Nakazaki N."/>
            <person name="Shinpo S."/>
            <person name="Takeuchi C."/>
            <person name="Wada T."/>
            <person name="Watanabe A."/>
            <person name="Yamada M."/>
            <person name="Yasuda M."/>
            <person name="Tabata S."/>
        </authorList>
    </citation>
    <scope>NUCLEOTIDE SEQUENCE [LARGE SCALE GENOMIC DNA]</scope>
    <source>
        <strain>cv. Columbia</strain>
    </source>
</reference>
<reference key="2">
    <citation type="journal article" date="2017" name="Plant J.">
        <title>Araport11: a complete reannotation of the Arabidopsis thaliana reference genome.</title>
        <authorList>
            <person name="Cheng C.Y."/>
            <person name="Krishnakumar V."/>
            <person name="Chan A.P."/>
            <person name="Thibaud-Nissen F."/>
            <person name="Schobel S."/>
            <person name="Town C.D."/>
        </authorList>
    </citation>
    <scope>GENOME REANNOTATION</scope>
    <source>
        <strain>cv. Columbia</strain>
    </source>
</reference>
<reference key="3">
    <citation type="journal article" date="2003" name="Science">
        <title>Empirical analysis of transcriptional activity in the Arabidopsis genome.</title>
        <authorList>
            <person name="Yamada K."/>
            <person name="Lim J."/>
            <person name="Dale J.M."/>
            <person name="Chen H."/>
            <person name="Shinn P."/>
            <person name="Palm C.J."/>
            <person name="Southwick A.M."/>
            <person name="Wu H.C."/>
            <person name="Kim C.J."/>
            <person name="Nguyen M."/>
            <person name="Pham P.K."/>
            <person name="Cheuk R.F."/>
            <person name="Karlin-Newmann G."/>
            <person name="Liu S.X."/>
            <person name="Lam B."/>
            <person name="Sakano H."/>
            <person name="Wu T."/>
            <person name="Yu G."/>
            <person name="Miranda M."/>
            <person name="Quach H.L."/>
            <person name="Tripp M."/>
            <person name="Chang C.H."/>
            <person name="Lee J.M."/>
            <person name="Toriumi M.J."/>
            <person name="Chan M.M."/>
            <person name="Tang C.C."/>
            <person name="Onodera C.S."/>
            <person name="Deng J.M."/>
            <person name="Akiyama K."/>
            <person name="Ansari Y."/>
            <person name="Arakawa T."/>
            <person name="Banh J."/>
            <person name="Banno F."/>
            <person name="Bowser L."/>
            <person name="Brooks S.Y."/>
            <person name="Carninci P."/>
            <person name="Chao Q."/>
            <person name="Choy N."/>
            <person name="Enju A."/>
            <person name="Goldsmith A.D."/>
            <person name="Gurjal M."/>
            <person name="Hansen N.F."/>
            <person name="Hayashizaki Y."/>
            <person name="Johnson-Hopson C."/>
            <person name="Hsuan V.W."/>
            <person name="Iida K."/>
            <person name="Karnes M."/>
            <person name="Khan S."/>
            <person name="Koesema E."/>
            <person name="Ishida J."/>
            <person name="Jiang P.X."/>
            <person name="Jones T."/>
            <person name="Kawai J."/>
            <person name="Kamiya A."/>
            <person name="Meyers C."/>
            <person name="Nakajima M."/>
            <person name="Narusaka M."/>
            <person name="Seki M."/>
            <person name="Sakurai T."/>
            <person name="Satou M."/>
            <person name="Tamse R."/>
            <person name="Vaysberg M."/>
            <person name="Wallender E.K."/>
            <person name="Wong C."/>
            <person name="Yamamura Y."/>
            <person name="Yuan S."/>
            <person name="Shinozaki K."/>
            <person name="Davis R.W."/>
            <person name="Theologis A."/>
            <person name="Ecker J.R."/>
        </authorList>
    </citation>
    <scope>NUCLEOTIDE SEQUENCE [LARGE SCALE MRNA]</scope>
    <source>
        <strain>cv. Columbia</strain>
    </source>
</reference>
<reference key="4">
    <citation type="journal article" date="2003" name="Mol. Cell. Proteomics">
        <title>Large-scale analysis of in vivo phosphorylated membrane proteins by immobilized metal ion affinity chromatography and mass spectrometry.</title>
        <authorList>
            <person name="Nuehse T.S."/>
            <person name="Stensballe A."/>
            <person name="Jensen O.N."/>
            <person name="Peck S.C."/>
        </authorList>
    </citation>
    <scope>PHOSPHORYLATION [LARGE SCALE ANALYSIS] AT SER-626</scope>
    <scope>IDENTIFICATION BY MASS SPECTROMETRY [LARGE SCALE ANALYSIS]</scope>
    <source>
        <strain>cv. La-0</strain>
    </source>
</reference>
<reference key="5">
    <citation type="journal article" date="2004" name="Plant Cell">
        <title>Phosphoproteomics of the Arabidopsis plasma membrane and a new phosphorylation site database.</title>
        <authorList>
            <person name="Nuehse T.S."/>
            <person name="Stensballe A."/>
            <person name="Jensen O.N."/>
            <person name="Peck S.C."/>
        </authorList>
    </citation>
    <scope>PHOSPHORYLATION [LARGE SCALE ANALYSIS] AT SER-626</scope>
    <scope>IDENTIFICATION BY MASS SPECTROMETRY [LARGE SCALE ANALYSIS]</scope>
</reference>
<reference key="6">
    <citation type="journal article" date="2007" name="Biochem. Biophys. Res. Commun.">
        <title>Novel subsets of the Arabidopsis plasmalemma phosphoproteome identify phosphorylation sites in secondary active transporters.</title>
        <authorList>
            <person name="Hem S."/>
            <person name="Rofidal V."/>
            <person name="Sommerer N."/>
            <person name="Rossignol M."/>
        </authorList>
    </citation>
    <scope>PHOSPHORYLATION [LARGE SCALE ANALYSIS] AT SER-621 AND SER-626</scope>
    <scope>IDENTIFICATION BY MASS SPECTROMETRY [LARGE SCALE ANALYSIS]</scope>
</reference>
<reference key="7">
    <citation type="journal article" date="2009" name="J. Proteomics">
        <title>Phosphoproteomic analysis of nuclei-enriched fractions from Arabidopsis thaliana.</title>
        <authorList>
            <person name="Jones A.M.E."/>
            <person name="MacLean D."/>
            <person name="Studholme D.J."/>
            <person name="Serna-Sanz A."/>
            <person name="Andreasson E."/>
            <person name="Rathjen J.P."/>
            <person name="Peck S.C."/>
        </authorList>
    </citation>
    <scope>PHOSPHORYLATION [LARGE SCALE ANALYSIS] AT SER-626</scope>
    <scope>IDENTIFICATION BY MASS SPECTROMETRY [LARGE SCALE ANALYSIS]</scope>
    <source>
        <strain>cv. Columbia</strain>
    </source>
</reference>
<reference key="8">
    <citation type="journal article" date="2009" name="Plant Physiol.">
        <title>Large-scale Arabidopsis phosphoproteome profiling reveals novel chloroplast kinase substrates and phosphorylation networks.</title>
        <authorList>
            <person name="Reiland S."/>
            <person name="Messerli G."/>
            <person name="Baerenfaller K."/>
            <person name="Gerrits B."/>
            <person name="Endler A."/>
            <person name="Grossmann J."/>
            <person name="Gruissem W."/>
            <person name="Baginsky S."/>
        </authorList>
    </citation>
    <scope>PHOSPHORYLATION [LARGE SCALE ANALYSIS] AT SER-621 AND SER-626</scope>
    <scope>IDENTIFICATION BY MASS SPECTROMETRY [LARGE SCALE ANALYSIS]</scope>
</reference>
<dbReference type="EMBL" id="AC018363">
    <property type="protein sequence ID" value="AAF26971.1"/>
    <property type="molecule type" value="Genomic_DNA"/>
</dbReference>
<dbReference type="EMBL" id="CP002686">
    <property type="protein sequence ID" value="AEE73873.1"/>
    <property type="molecule type" value="Genomic_DNA"/>
</dbReference>
<dbReference type="EMBL" id="AF372969">
    <property type="protein sequence ID" value="AAK50106.1"/>
    <property type="molecule type" value="mRNA"/>
</dbReference>
<dbReference type="EMBL" id="BT006352">
    <property type="protein sequence ID" value="AAP21160.1"/>
    <property type="molecule type" value="mRNA"/>
</dbReference>
<dbReference type="RefSeq" id="NP_186938.1">
    <property type="nucleotide sequence ID" value="NM_111157.5"/>
</dbReference>
<dbReference type="SMR" id="Q9M8T0"/>
<dbReference type="BioGRID" id="6531">
    <property type="interactions" value="87"/>
</dbReference>
<dbReference type="FunCoup" id="Q9M8T0">
    <property type="interactions" value="17"/>
</dbReference>
<dbReference type="IntAct" id="Q9M8T0">
    <property type="interactions" value="90"/>
</dbReference>
<dbReference type="STRING" id="3702.Q9M8T0"/>
<dbReference type="iPTMnet" id="Q9M8T0"/>
<dbReference type="SwissPalm" id="Q9M8T0"/>
<dbReference type="PaxDb" id="3702-AT3G02880.1"/>
<dbReference type="ProteomicsDB" id="234606"/>
<dbReference type="EnsemblPlants" id="AT3G02880.1">
    <property type="protein sequence ID" value="AT3G02880.1"/>
    <property type="gene ID" value="AT3G02880"/>
</dbReference>
<dbReference type="GeneID" id="821198"/>
<dbReference type="Gramene" id="AT3G02880.1">
    <property type="protein sequence ID" value="AT3G02880.1"/>
    <property type="gene ID" value="AT3G02880"/>
</dbReference>
<dbReference type="KEGG" id="ath:AT3G02880"/>
<dbReference type="Araport" id="AT3G02880"/>
<dbReference type="TAIR" id="AT3G02880">
    <property type="gene designation" value="KIN7"/>
</dbReference>
<dbReference type="eggNOG" id="ENOG502QSFF">
    <property type="taxonomic scope" value="Eukaryota"/>
</dbReference>
<dbReference type="HOGENOM" id="CLU_000288_92_6_1"/>
<dbReference type="InParanoid" id="Q9M8T0"/>
<dbReference type="OMA" id="SCTAQFP"/>
<dbReference type="OrthoDB" id="652551at2759"/>
<dbReference type="PhylomeDB" id="Q9M8T0"/>
<dbReference type="CD-CODE" id="4299E36E">
    <property type="entry name" value="Nucleolus"/>
</dbReference>
<dbReference type="PRO" id="PR:Q9M8T0"/>
<dbReference type="Proteomes" id="UP000006548">
    <property type="component" value="Chromosome 3"/>
</dbReference>
<dbReference type="ExpressionAtlas" id="Q9M8T0">
    <property type="expression patterns" value="baseline and differential"/>
</dbReference>
<dbReference type="GO" id="GO:0005829">
    <property type="term" value="C:cytosol"/>
    <property type="evidence" value="ECO:0007005"/>
    <property type="project" value="TAIR"/>
</dbReference>
<dbReference type="GO" id="GO:0009505">
    <property type="term" value="C:plant-type cell wall"/>
    <property type="evidence" value="ECO:0007005"/>
    <property type="project" value="TAIR"/>
</dbReference>
<dbReference type="GO" id="GO:0005886">
    <property type="term" value="C:plasma membrane"/>
    <property type="evidence" value="ECO:0007005"/>
    <property type="project" value="TAIR"/>
</dbReference>
<dbReference type="GO" id="GO:0009506">
    <property type="term" value="C:plasmodesma"/>
    <property type="evidence" value="ECO:0007005"/>
    <property type="project" value="TAIR"/>
</dbReference>
<dbReference type="GO" id="GO:0005524">
    <property type="term" value="F:ATP binding"/>
    <property type="evidence" value="ECO:0007669"/>
    <property type="project" value="UniProtKB-KW"/>
</dbReference>
<dbReference type="GO" id="GO:0004672">
    <property type="term" value="F:protein kinase activity"/>
    <property type="evidence" value="ECO:0007669"/>
    <property type="project" value="InterPro"/>
</dbReference>
<dbReference type="FunFam" id="3.30.200.20:FF:000307">
    <property type="entry name" value="pollen receptor-like kinase 1"/>
    <property type="match status" value="1"/>
</dbReference>
<dbReference type="FunFam" id="1.10.510.10:FF:000585">
    <property type="entry name" value="Probable inactive receptor kinase At1g48480"/>
    <property type="match status" value="1"/>
</dbReference>
<dbReference type="FunFam" id="3.80.10.10:FF:000234">
    <property type="entry name" value="Probable inactive receptor kinase RLK902"/>
    <property type="match status" value="1"/>
</dbReference>
<dbReference type="Gene3D" id="3.30.200.20">
    <property type="entry name" value="Phosphorylase Kinase, domain 1"/>
    <property type="match status" value="1"/>
</dbReference>
<dbReference type="Gene3D" id="3.80.10.10">
    <property type="entry name" value="Ribonuclease Inhibitor"/>
    <property type="match status" value="2"/>
</dbReference>
<dbReference type="Gene3D" id="1.10.510.10">
    <property type="entry name" value="Transferase(Phosphotransferase) domain 1"/>
    <property type="match status" value="1"/>
</dbReference>
<dbReference type="InterPro" id="IPR050994">
    <property type="entry name" value="At_inactive_RLKs"/>
</dbReference>
<dbReference type="InterPro" id="IPR011009">
    <property type="entry name" value="Kinase-like_dom_sf"/>
</dbReference>
<dbReference type="InterPro" id="IPR001611">
    <property type="entry name" value="Leu-rich_rpt"/>
</dbReference>
<dbReference type="InterPro" id="IPR032675">
    <property type="entry name" value="LRR_dom_sf"/>
</dbReference>
<dbReference type="InterPro" id="IPR013210">
    <property type="entry name" value="LRR_N_plant-typ"/>
</dbReference>
<dbReference type="InterPro" id="IPR000719">
    <property type="entry name" value="Prot_kinase_dom"/>
</dbReference>
<dbReference type="PANTHER" id="PTHR48010">
    <property type="entry name" value="OS05G0588300 PROTEIN"/>
    <property type="match status" value="1"/>
</dbReference>
<dbReference type="PANTHER" id="PTHR48010:SF32">
    <property type="entry name" value="PROTEIN KINASE DOMAIN-CONTAINING PROTEIN"/>
    <property type="match status" value="1"/>
</dbReference>
<dbReference type="Pfam" id="PF00560">
    <property type="entry name" value="LRR_1"/>
    <property type="match status" value="1"/>
</dbReference>
<dbReference type="Pfam" id="PF13855">
    <property type="entry name" value="LRR_8"/>
    <property type="match status" value="1"/>
</dbReference>
<dbReference type="Pfam" id="PF08263">
    <property type="entry name" value="LRRNT_2"/>
    <property type="match status" value="1"/>
</dbReference>
<dbReference type="Pfam" id="PF00069">
    <property type="entry name" value="Pkinase"/>
    <property type="match status" value="1"/>
</dbReference>
<dbReference type="SUPFAM" id="SSF52058">
    <property type="entry name" value="L domain-like"/>
    <property type="match status" value="1"/>
</dbReference>
<dbReference type="SUPFAM" id="SSF56112">
    <property type="entry name" value="Protein kinase-like (PK-like)"/>
    <property type="match status" value="1"/>
</dbReference>
<dbReference type="PROSITE" id="PS50011">
    <property type="entry name" value="PROTEIN_KINASE_DOM"/>
    <property type="match status" value="1"/>
</dbReference>
<protein>
    <recommendedName>
        <fullName>Probable inactive receptor kinase At3g02880</fullName>
    </recommendedName>
</protein>
<evidence type="ECO:0000250" key="1">
    <source>
        <dbReference type="UniProtKB" id="Q94AG2"/>
    </source>
</evidence>
<evidence type="ECO:0000250" key="2">
    <source>
        <dbReference type="UniProtKB" id="Q94F62"/>
    </source>
</evidence>
<evidence type="ECO:0000255" key="3"/>
<evidence type="ECO:0000255" key="4">
    <source>
        <dbReference type="PROSITE-ProRule" id="PRU00159"/>
    </source>
</evidence>
<evidence type="ECO:0000256" key="5">
    <source>
        <dbReference type="SAM" id="MobiDB-lite"/>
    </source>
</evidence>
<evidence type="ECO:0000305" key="6"/>
<evidence type="ECO:0007744" key="7">
    <source>
    </source>
</evidence>
<evidence type="ECO:0007744" key="8">
    <source>
    </source>
</evidence>
<evidence type="ECO:0007744" key="9">
    <source>
    </source>
</evidence>
<evidence type="ECO:0007744" key="10">
    <source>
    </source>
</evidence>
<evidence type="ECO:0007744" key="11">
    <source>
    </source>
</evidence>
<comment type="interaction">
    <interactant intactId="EBI-1238677">
        <id>Q9M8T0</id>
    </interactant>
    <interactant intactId="EBI-20655952">
        <id>C0LGG6-2</id>
        <label>At1g51890</label>
    </interactant>
    <organismsDiffer>false</organismsDiffer>
    <experiments>2</experiments>
</comment>
<comment type="interaction">
    <interactant intactId="EBI-1238677">
        <id>Q9M8T0</id>
    </interactant>
    <interactant intactId="EBI-20656718">
        <id>A0A1P8ASI5</id>
        <label>At1g56120</label>
    </interactant>
    <organismsDiffer>false</organismsDiffer>
    <experiments>4</experiments>
</comment>
<comment type="interaction">
    <interactant intactId="EBI-1238677">
        <id>Q9M8T0</id>
    </interactant>
    <interactant intactId="EBI-20657656">
        <id>C0LGH8</id>
        <label>At1g63430</label>
    </interactant>
    <organismsDiffer>false</organismsDiffer>
    <experiments>3</experiments>
</comment>
<comment type="interaction">
    <interactant intactId="EBI-1238677">
        <id>Q9M8T0</id>
    </interactant>
    <interactant intactId="EBI-1235664">
        <id>P25854</id>
        <label>CAM4</label>
    </interactant>
    <organismsDiffer>false</organismsDiffer>
    <experiments>2</experiments>
</comment>
<comment type="interaction">
    <interactant intactId="EBI-1238677">
        <id>Q9M8T0</id>
    </interactant>
    <interactant intactId="EBI-1236031">
        <id>P59220</id>
        <label>CAM7</label>
    </interactant>
    <organismsDiffer>false</organismsDiffer>
    <experiments>2</experiments>
</comment>
<comment type="interaction">
    <interactant intactId="EBI-1238677">
        <id>Q9M8T0</id>
    </interactant>
    <interactant intactId="EBI-20658889">
        <id>Q9SNA2</id>
        <label>F18L15.70</label>
    </interactant>
    <organismsDiffer>false</organismsDiffer>
    <experiments>2</experiments>
</comment>
<comment type="interaction">
    <interactant intactId="EBI-1238677">
        <id>Q9M8T0</id>
    </interactant>
    <interactant intactId="EBI-16955231">
        <id>Q9M0D8</id>
        <label>LRR-RLK</label>
    </interactant>
    <organismsDiffer>false</organismsDiffer>
    <experiments>2</experiments>
</comment>
<comment type="interaction">
    <interactant intactId="EBI-1238677">
        <id>Q9M8T0</id>
    </interactant>
    <interactant intactId="EBI-20663701">
        <id>C0LGP2</id>
        <label>MEE39</label>
    </interactant>
    <organismsDiffer>false</organismsDiffer>
    <experiments>2</experiments>
</comment>
<comment type="interaction">
    <interactant intactId="EBI-1238677">
        <id>Q9M8T0</id>
    </interactant>
    <interactant intactId="EBI-17121474">
        <id>Q93ZS4</id>
        <label>NIK3</label>
    </interactant>
    <organismsDiffer>false</organismsDiffer>
    <experiments>2</experiments>
</comment>
<comment type="interaction">
    <interactant intactId="EBI-1238677">
        <id>Q9M8T0</id>
    </interactant>
    <interactant intactId="EBI-16902047">
        <id>Q9FN37</id>
        <label>PSKR2</label>
    </interactant>
    <organismsDiffer>false</organismsDiffer>
    <experiments>2</experiments>
</comment>
<comment type="subcellular location">
    <subcellularLocation>
        <location evidence="6">Membrane</location>
        <topology evidence="6">Multi-pass membrane protein</topology>
    </subcellularLocation>
</comment>
<comment type="domain">
    <text>The protein kinase domain is predicted to be catalytically inactive.</text>
</comment>
<comment type="similarity">
    <text evidence="4">Belongs to the protein kinase superfamily. Ser/Thr protein kinase family.</text>
</comment>
<feature type="signal peptide" evidence="3">
    <location>
        <begin position="1"/>
        <end position="23"/>
    </location>
</feature>
<feature type="chain" id="PRO_0000317070" description="Probable inactive receptor kinase At3g02880">
    <location>
        <begin position="24"/>
        <end position="627"/>
    </location>
</feature>
<feature type="transmembrane region" description="Helical" evidence="3">
    <location>
        <begin position="253"/>
        <end position="273"/>
    </location>
</feature>
<feature type="transmembrane region" description="Helical" evidence="3">
    <location>
        <begin position="389"/>
        <end position="409"/>
    </location>
</feature>
<feature type="repeat" description="LRR 1">
    <location>
        <begin position="91"/>
        <end position="112"/>
    </location>
</feature>
<feature type="repeat" description="LRR 2">
    <location>
        <begin position="115"/>
        <end position="137"/>
    </location>
</feature>
<feature type="repeat" description="LRR 3">
    <location>
        <begin position="139"/>
        <end position="161"/>
    </location>
</feature>
<feature type="repeat" description="LRR 4">
    <location>
        <begin position="163"/>
        <end position="184"/>
    </location>
</feature>
<feature type="repeat" description="LRR 5">
    <location>
        <begin position="185"/>
        <end position="206"/>
    </location>
</feature>
<feature type="domain" description="Protein kinase" evidence="4">
    <location>
        <begin position="345"/>
        <end position="620"/>
    </location>
</feature>
<feature type="region of interest" description="Disordered" evidence="5">
    <location>
        <begin position="222"/>
        <end position="246"/>
    </location>
</feature>
<feature type="binding site" evidence="4">
    <location>
        <begin position="351"/>
        <end position="359"/>
    </location>
    <ligand>
        <name>ATP</name>
        <dbReference type="ChEBI" id="CHEBI:30616"/>
    </ligand>
</feature>
<feature type="binding site" evidence="4">
    <location>
        <position position="373"/>
    </location>
    <ligand>
        <name>ATP</name>
        <dbReference type="ChEBI" id="CHEBI:30616"/>
    </ligand>
</feature>
<feature type="modified residue" description="Phosphoserine" evidence="2">
    <location>
        <position position="347"/>
    </location>
</feature>
<feature type="modified residue" description="Phosphoserine" evidence="1">
    <location>
        <position position="424"/>
    </location>
</feature>
<feature type="modified residue" description="Phosphothreonine" evidence="1">
    <location>
        <position position="444"/>
    </location>
</feature>
<feature type="modified residue" description="Phosphoserine" evidence="1">
    <location>
        <position position="519"/>
    </location>
</feature>
<feature type="modified residue" description="Phosphothreonine" evidence="1">
    <location>
        <position position="595"/>
    </location>
</feature>
<feature type="modified residue" description="Phosphoserine" evidence="9 11">
    <location>
        <position position="621"/>
    </location>
</feature>
<feature type="modified residue" description="Phosphoserine" evidence="7 8 9 10 11">
    <location>
        <position position="626"/>
    </location>
</feature>
<organism>
    <name type="scientific">Arabidopsis thaliana</name>
    <name type="common">Mouse-ear cress</name>
    <dbReference type="NCBI Taxonomy" id="3702"/>
    <lineage>
        <taxon>Eukaryota</taxon>
        <taxon>Viridiplantae</taxon>
        <taxon>Streptophyta</taxon>
        <taxon>Embryophyta</taxon>
        <taxon>Tracheophyta</taxon>
        <taxon>Spermatophyta</taxon>
        <taxon>Magnoliopsida</taxon>
        <taxon>eudicotyledons</taxon>
        <taxon>Gunneridae</taxon>
        <taxon>Pentapetalae</taxon>
        <taxon>rosids</taxon>
        <taxon>malvids</taxon>
        <taxon>Brassicales</taxon>
        <taxon>Brassicaceae</taxon>
        <taxon>Camelineae</taxon>
        <taxon>Arabidopsis</taxon>
    </lineage>
</organism>
<proteinExistence type="evidence at protein level"/>
<accession>Q9M8T0</accession>
<keyword id="KW-0067">ATP-binding</keyword>
<keyword id="KW-0433">Leucine-rich repeat</keyword>
<keyword id="KW-0472">Membrane</keyword>
<keyword id="KW-0547">Nucleotide-binding</keyword>
<keyword id="KW-0597">Phosphoprotein</keyword>
<keyword id="KW-0675">Receptor</keyword>
<keyword id="KW-1185">Reference proteome</keyword>
<keyword id="KW-0677">Repeat</keyword>
<keyword id="KW-0732">Signal</keyword>
<keyword id="KW-0812">Transmembrane</keyword>
<keyword id="KW-1133">Transmembrane helix</keyword>
<gene>
    <name type="ordered locus">At3g02880</name>
    <name type="ORF">F13E7.17</name>
</gene>
<sequence length="627" mass="67752">MKYKRKLSLSVVFLFVFYLAAVTSDLESDRRALLAVRNSVRGRPLLWNMSASSPCNWHGVHCDAGRVTALRLPGSGLFGSLPIGGIGNLTQLKTLSLRFNSLSGPIPSDFSNLVLLRYLYLQGNAFSGEIPSLLFTLPSIIRINLGENKFSGRIPDNVNSATRLVTLYLERNQLSGPIPEITLPLQQFNVSSNQLNGSIPSSLSSWPRTAFEGNTLCGKPLDTCEAESPNGGDAGGPNTPPEKKDSDKLSAGAIVGIVIGCVVGLLLLLLILFCLCRKRKKEENVPSRNVEAPVAAATSSAAIPKETVVVVPPAKATGSESGAVNKDLTFFVKSFGEFDLDGLLKASAEVLGKGTVGSSYKASFEHGLVVAVKRLRDVVVPEKEFRERLHVLGSMSHANLVTLIAYYFSRDEKLLVFEYMSKGSLSAILHGNKGNGRTPLNWETRAGIALGAARAISYLHSRDGTTSHGNIKSSNILLSDSYEAKVSDYGLAPIISSTSAPNRIDGYRAPEITDARKISQKADVYSFGVLILELLTGKSPTHQQLNEEGVDLPRWVQSVTEQQTPSDVLDPELTRYQPEGNENIIRLLKIGMSCTAQFPDSRPSMAEVTRLIEEVSHSSGSPNPVSD</sequence>
<name>Y3288_ARATH</name>